<comment type="function">
    <text evidence="1">The glycine cleavage system catalyzes the degradation of glycine. The H protein shuttles the methylamine group of glycine from the P protein to the T protein.</text>
</comment>
<comment type="cofactor">
    <cofactor evidence="1">
        <name>(R)-lipoate</name>
        <dbReference type="ChEBI" id="CHEBI:83088"/>
    </cofactor>
    <text evidence="1">Binds 1 lipoyl cofactor covalently.</text>
</comment>
<comment type="subunit">
    <text evidence="1">The glycine cleavage system is composed of four proteins: P, T, L and H.</text>
</comment>
<comment type="similarity">
    <text evidence="1">Belongs to the GcvH family.</text>
</comment>
<accession>B0TSG6</accession>
<name>GCSH_SHEHH</name>
<evidence type="ECO:0000255" key="1">
    <source>
        <dbReference type="HAMAP-Rule" id="MF_00272"/>
    </source>
</evidence>
<evidence type="ECO:0000255" key="2">
    <source>
        <dbReference type="PROSITE-ProRule" id="PRU01066"/>
    </source>
</evidence>
<keyword id="KW-0450">Lipoyl</keyword>
<dbReference type="EMBL" id="CP000931">
    <property type="protein sequence ID" value="ABZ77920.1"/>
    <property type="molecule type" value="Genomic_DNA"/>
</dbReference>
<dbReference type="RefSeq" id="WP_012278440.1">
    <property type="nucleotide sequence ID" value="NC_010334.1"/>
</dbReference>
<dbReference type="SMR" id="B0TSG6"/>
<dbReference type="STRING" id="458817.Shal_3374"/>
<dbReference type="KEGG" id="shl:Shal_3374"/>
<dbReference type="eggNOG" id="COG0509">
    <property type="taxonomic scope" value="Bacteria"/>
</dbReference>
<dbReference type="HOGENOM" id="CLU_097408_2_1_6"/>
<dbReference type="OrthoDB" id="9796712at2"/>
<dbReference type="Proteomes" id="UP000001317">
    <property type="component" value="Chromosome"/>
</dbReference>
<dbReference type="GO" id="GO:0005829">
    <property type="term" value="C:cytosol"/>
    <property type="evidence" value="ECO:0007669"/>
    <property type="project" value="TreeGrafter"/>
</dbReference>
<dbReference type="GO" id="GO:0005960">
    <property type="term" value="C:glycine cleavage complex"/>
    <property type="evidence" value="ECO:0007669"/>
    <property type="project" value="InterPro"/>
</dbReference>
<dbReference type="GO" id="GO:0019464">
    <property type="term" value="P:glycine decarboxylation via glycine cleavage system"/>
    <property type="evidence" value="ECO:0007669"/>
    <property type="project" value="UniProtKB-UniRule"/>
</dbReference>
<dbReference type="CDD" id="cd06848">
    <property type="entry name" value="GCS_H"/>
    <property type="match status" value="1"/>
</dbReference>
<dbReference type="FunFam" id="2.40.50.100:FF:000011">
    <property type="entry name" value="Glycine cleavage system H protein"/>
    <property type="match status" value="1"/>
</dbReference>
<dbReference type="Gene3D" id="2.40.50.100">
    <property type="match status" value="1"/>
</dbReference>
<dbReference type="HAMAP" id="MF_00272">
    <property type="entry name" value="GcvH"/>
    <property type="match status" value="1"/>
</dbReference>
<dbReference type="InterPro" id="IPR003016">
    <property type="entry name" value="2-oxoA_DH_lipoyl-BS"/>
</dbReference>
<dbReference type="InterPro" id="IPR000089">
    <property type="entry name" value="Biotin_lipoyl"/>
</dbReference>
<dbReference type="InterPro" id="IPR002930">
    <property type="entry name" value="GCV_H"/>
</dbReference>
<dbReference type="InterPro" id="IPR033753">
    <property type="entry name" value="GCV_H/Fam206"/>
</dbReference>
<dbReference type="InterPro" id="IPR017453">
    <property type="entry name" value="GCV_H_sub"/>
</dbReference>
<dbReference type="InterPro" id="IPR011053">
    <property type="entry name" value="Single_hybrid_motif"/>
</dbReference>
<dbReference type="NCBIfam" id="TIGR00527">
    <property type="entry name" value="gcvH"/>
    <property type="match status" value="1"/>
</dbReference>
<dbReference type="NCBIfam" id="NF002270">
    <property type="entry name" value="PRK01202.1"/>
    <property type="match status" value="1"/>
</dbReference>
<dbReference type="PANTHER" id="PTHR11715">
    <property type="entry name" value="GLYCINE CLEAVAGE SYSTEM H PROTEIN"/>
    <property type="match status" value="1"/>
</dbReference>
<dbReference type="PANTHER" id="PTHR11715:SF3">
    <property type="entry name" value="GLYCINE CLEAVAGE SYSTEM H PROTEIN-RELATED"/>
    <property type="match status" value="1"/>
</dbReference>
<dbReference type="Pfam" id="PF01597">
    <property type="entry name" value="GCV_H"/>
    <property type="match status" value="1"/>
</dbReference>
<dbReference type="SUPFAM" id="SSF51230">
    <property type="entry name" value="Single hybrid motif"/>
    <property type="match status" value="1"/>
</dbReference>
<dbReference type="PROSITE" id="PS50968">
    <property type="entry name" value="BIOTINYL_LIPOYL"/>
    <property type="match status" value="1"/>
</dbReference>
<dbReference type="PROSITE" id="PS00189">
    <property type="entry name" value="LIPOYL"/>
    <property type="match status" value="1"/>
</dbReference>
<feature type="chain" id="PRO_1000078740" description="Glycine cleavage system H protein">
    <location>
        <begin position="1"/>
        <end position="129"/>
    </location>
</feature>
<feature type="domain" description="Lipoyl-binding" evidence="2">
    <location>
        <begin position="24"/>
        <end position="106"/>
    </location>
</feature>
<feature type="modified residue" description="N6-lipoyllysine" evidence="1">
    <location>
        <position position="65"/>
    </location>
</feature>
<sequence length="129" mass="13986">MSNIPAELKYASSHEWVRKEEDGSYTVGISEHAQELLGDMVFVELPEVGDDVNSGEDCAVAESVKAASDIYAPLSGEVIAVNEALEDSPELVNSDAFGDGWFFRVMPTDLAELDNLLDAEGYQAVIDDE</sequence>
<gene>
    <name evidence="1" type="primary">gcvH</name>
    <name type="ordered locus">Shal_3374</name>
</gene>
<proteinExistence type="inferred from homology"/>
<protein>
    <recommendedName>
        <fullName evidence="1">Glycine cleavage system H protein</fullName>
    </recommendedName>
</protein>
<reference key="1">
    <citation type="submission" date="2008-01" db="EMBL/GenBank/DDBJ databases">
        <title>Complete sequence of Shewanella halifaxensis HAW-EB4.</title>
        <authorList>
            <consortium name="US DOE Joint Genome Institute"/>
            <person name="Copeland A."/>
            <person name="Lucas S."/>
            <person name="Lapidus A."/>
            <person name="Glavina del Rio T."/>
            <person name="Dalin E."/>
            <person name="Tice H."/>
            <person name="Bruce D."/>
            <person name="Goodwin L."/>
            <person name="Pitluck S."/>
            <person name="Sims D."/>
            <person name="Brettin T."/>
            <person name="Detter J.C."/>
            <person name="Han C."/>
            <person name="Kuske C.R."/>
            <person name="Schmutz J."/>
            <person name="Larimer F."/>
            <person name="Land M."/>
            <person name="Hauser L."/>
            <person name="Kyrpides N."/>
            <person name="Kim E."/>
            <person name="Zhao J.-S."/>
            <person name="Richardson P."/>
        </authorList>
    </citation>
    <scope>NUCLEOTIDE SEQUENCE [LARGE SCALE GENOMIC DNA]</scope>
    <source>
        <strain>HAW-EB4</strain>
    </source>
</reference>
<organism>
    <name type="scientific">Shewanella halifaxensis (strain HAW-EB4)</name>
    <dbReference type="NCBI Taxonomy" id="458817"/>
    <lineage>
        <taxon>Bacteria</taxon>
        <taxon>Pseudomonadati</taxon>
        <taxon>Pseudomonadota</taxon>
        <taxon>Gammaproteobacteria</taxon>
        <taxon>Alteromonadales</taxon>
        <taxon>Shewanellaceae</taxon>
        <taxon>Shewanella</taxon>
    </lineage>
</organism>